<feature type="signal peptide" evidence="1">
    <location>
        <begin position="1"/>
        <end position="18"/>
    </location>
</feature>
<feature type="chain" id="PRO_5007732040" description="Yellow-related salivary protein ASP4" evidence="1">
    <location>
        <begin position="19"/>
        <end position="391"/>
    </location>
</feature>
<feature type="glycosylation site" description="N-linked (GlcNAc...) asparagine" evidence="2">
    <location>
        <position position="29"/>
    </location>
</feature>
<sequence>MKIFLCIIAVVSLQGVVAFHVEREYAWKNITYEGIDPASYNIENSIPTAFAHDAASKKIFITVPRRNQIPFTLTELDTTKHPERSPPLSKFPGSDKLISVYQPVIDECRRLWIADVGQVEYKGDEQKYPKQKAAIIAYDLTKDNYPEIDRYEIPNNVAGNSLGFGGFAVDVTNPKEGCGNTFVYITNFEDNTLIVYDQEKKDSWKISHGSFKPEHDSTLSHNGEQYKYRVGIFGIALGDRDPEGNRPAYYIAGSSTKLFEISTKILKQKGAKFDPVNLGNRGPHSEAIALAYDPKTKVIFFAEADSRQISCWNIQKPLNHKNTDVIYASSKFIFGTDISVDSESQLWFLSNGQPPIDNLKLTFDKPHIRLMRVDTAKAIRRTKCEVKRVKP</sequence>
<protein>
    <recommendedName>
        <fullName evidence="6">Yellow-related salivary protein ASP4</fullName>
    </recommendedName>
    <alternativeName>
        <fullName evidence="5">PorASP4</fullName>
    </alternativeName>
</protein>
<accession>V5K5P3</accession>
<comment type="function">
    <text evidence="4 6">Probably modulates blood feeding of sand flies on vertebrate species by binding and sequestering different mediators involved in the host response (Probable). Binds biogenic amines (PubMed:31604119). Binds serotonin and dopamine with high affinity (PubMed:31604119). Binds adrenaline, octopamine and adrenaline with medium affinity (PubMed:31604119). Binds histamine with low affinity (PubMed:31604119).</text>
</comment>
<comment type="subcellular location">
    <subcellularLocation>
        <location evidence="6">Secreted</location>
    </subcellularLocation>
</comment>
<comment type="tissue specificity">
    <text evidence="3">Female salivary gland (at protein level).</text>
</comment>
<comment type="similarity">
    <text evidence="6">Belongs to the major royal jelly protein family.</text>
</comment>
<proteinExistence type="evidence at protein level"/>
<reference evidence="8" key="1">
    <citation type="journal article" date="2014" name="PLoS Negl. Trop. Dis.">
        <title>Comparative Analysis of Salivary Gland Transcriptomes of Phlebotomus orientalis Sand Flies from Endemic and Non-endemic Foci of Visceral Leishmaniasis.</title>
        <authorList>
            <person name="Vlkova M."/>
            <person name="Sima M."/>
            <person name="Rohousova I."/>
            <person name="Kostalova T."/>
            <person name="Sumova P."/>
            <person name="Volfova V."/>
            <person name="Jaske E.L."/>
            <person name="Barbian K.D."/>
            <person name="Gebre-Michael T."/>
            <person name="Hailu A."/>
            <person name="Warburg A."/>
            <person name="Ribeiro J.M."/>
            <person name="Valenzuela J.G."/>
            <person name="Jochim R.C."/>
            <person name="Volf P."/>
        </authorList>
    </citation>
    <scope>NUCLEOTIDE SEQUENCE [MRNA]</scope>
    <scope>IDENTIFICATION BY MASS SPECTROMETRY</scope>
    <scope>TISSUE SPECIFICITY</scope>
    <source>
        <strain evidence="7">Addis Zemen</strain>
        <strain evidence="8">Melka Werer</strain>
        <tissue evidence="8">Salivary gland</tissue>
    </source>
</reference>
<reference evidence="6" key="2">
    <citation type="journal article" date="2019" name="Insect Biochem. Mol. Biol.">
        <title>Amine-binding properties of salivary yellow-related proteins in phlebotomine sand flies.</title>
        <authorList>
            <person name="Sumova P."/>
            <person name="Sima M."/>
            <person name="Kalouskova B."/>
            <person name="Polanska N."/>
            <person name="Vanek O."/>
            <person name="Oliveira F."/>
            <person name="Valenzuela J.G."/>
            <person name="Volf P."/>
        </authorList>
    </citation>
    <scope>FUNCTION</scope>
</reference>
<organism>
    <name type="scientific">Phlebotomus orientalis</name>
    <name type="common">Phlebotomine sand fly</name>
    <dbReference type="NCBI Taxonomy" id="99786"/>
    <lineage>
        <taxon>Eukaryota</taxon>
        <taxon>Metazoa</taxon>
        <taxon>Ecdysozoa</taxon>
        <taxon>Arthropoda</taxon>
        <taxon>Hexapoda</taxon>
        <taxon>Insecta</taxon>
        <taxon>Pterygota</taxon>
        <taxon>Neoptera</taxon>
        <taxon>Endopterygota</taxon>
        <taxon>Diptera</taxon>
        <taxon>Nematocera</taxon>
        <taxon>Psychodoidea</taxon>
        <taxon>Psychodidae</taxon>
        <taxon>Phlebotomus</taxon>
        <taxon>Larroussius</taxon>
    </lineage>
</organism>
<name>ASP4_PHLOR</name>
<evidence type="ECO:0000255" key="1"/>
<evidence type="ECO:0000255" key="2">
    <source>
        <dbReference type="PROSITE-ProRule" id="PRU00498"/>
    </source>
</evidence>
<evidence type="ECO:0000269" key="3">
    <source>
    </source>
</evidence>
<evidence type="ECO:0000269" key="4">
    <source>
    </source>
</evidence>
<evidence type="ECO:0000303" key="5">
    <source>
    </source>
</evidence>
<evidence type="ECO:0000305" key="6"/>
<evidence type="ECO:0000312" key="7">
    <source>
        <dbReference type="EMBL" id="AGT96428.1"/>
    </source>
</evidence>
<evidence type="ECO:0000312" key="8">
    <source>
        <dbReference type="EMBL" id="AGT96461.1"/>
    </source>
</evidence>
<dbReference type="EMBL" id="KC170934">
    <property type="protein sequence ID" value="AGT96428.1"/>
    <property type="molecule type" value="mRNA"/>
</dbReference>
<dbReference type="EMBL" id="KC170967">
    <property type="protein sequence ID" value="AGT96461.1"/>
    <property type="molecule type" value="mRNA"/>
</dbReference>
<dbReference type="SMR" id="V5K5P3"/>
<dbReference type="GO" id="GO:0005576">
    <property type="term" value="C:extracellular region"/>
    <property type="evidence" value="ECO:0007669"/>
    <property type="project" value="UniProtKB-SubCell"/>
</dbReference>
<dbReference type="Gene3D" id="2.120.10.30">
    <property type="entry name" value="TolB, C-terminal domain"/>
    <property type="match status" value="1"/>
</dbReference>
<dbReference type="InterPro" id="IPR011042">
    <property type="entry name" value="6-blade_b-propeller_TolB-like"/>
</dbReference>
<dbReference type="InterPro" id="IPR017996">
    <property type="entry name" value="Royal_jelly/protein_yellow"/>
</dbReference>
<dbReference type="PANTHER" id="PTHR10009">
    <property type="entry name" value="PROTEIN YELLOW-RELATED"/>
    <property type="match status" value="1"/>
</dbReference>
<dbReference type="PANTHER" id="PTHR10009:SF11">
    <property type="entry name" value="RH54244P"/>
    <property type="match status" value="1"/>
</dbReference>
<dbReference type="Pfam" id="PF03022">
    <property type="entry name" value="MRJP"/>
    <property type="match status" value="1"/>
</dbReference>
<dbReference type="SUPFAM" id="SSF75011">
    <property type="entry name" value="3-carboxy-cis,cis-mucoante lactonizing enzyme"/>
    <property type="match status" value="1"/>
</dbReference>
<keyword id="KW-0325">Glycoprotein</keyword>
<keyword id="KW-0964">Secreted</keyword>
<keyword id="KW-0732">Signal</keyword>